<dbReference type="EMBL" id="JO841827">
    <property type="protein sequence ID" value="AEO33444.1"/>
    <property type="status" value="ALT_INIT"/>
    <property type="molecule type" value="mRNA"/>
</dbReference>
<dbReference type="SMR" id="G3MIX6"/>
<dbReference type="GO" id="GO:0005576">
    <property type="term" value="C:extracellular region"/>
    <property type="evidence" value="ECO:0007669"/>
    <property type="project" value="UniProtKB-SubCell"/>
</dbReference>
<dbReference type="GO" id="GO:0019957">
    <property type="term" value="F:C-C chemokine binding"/>
    <property type="evidence" value="ECO:0007669"/>
    <property type="project" value="InterPro"/>
</dbReference>
<dbReference type="Gene3D" id="2.30.130.100">
    <property type="match status" value="1"/>
</dbReference>
<dbReference type="InterPro" id="IPR045797">
    <property type="entry name" value="EVA_Class_A"/>
</dbReference>
<dbReference type="Pfam" id="PF19429">
    <property type="entry name" value="EVA_Class_A"/>
    <property type="match status" value="1"/>
</dbReference>
<comment type="function">
    <text evidence="4">Salivary chemokine-binding protein which binds to host chemokines CCL3 and CCL4.</text>
</comment>
<comment type="subcellular location">
    <subcellularLocation>
        <location evidence="6">Secreted</location>
    </subcellularLocation>
</comment>
<comment type="sequence caution" evidence="6">
    <conflict type="erroneous initiation">
        <sequence resource="EMBL-CDS" id="AEO33444"/>
    </conflict>
    <text>Extended N-terminus.</text>
</comment>
<reference evidence="7" key="1">
    <citation type="journal article" date="2011" name="PLoS ONE">
        <title>A deep insight into the sialotranscriptome of the gulf coast tick, Amblyomma maculatum.</title>
        <authorList>
            <person name="Karim S."/>
            <person name="Singh P."/>
            <person name="Ribeiro J.M."/>
        </authorList>
    </citation>
    <scope>NUCLEOTIDE SEQUENCE [LARGE SCALE MRNA]</scope>
    <source>
        <tissue evidence="7">Salivary gland</tissue>
    </source>
</reference>
<reference evidence="6" key="2">
    <citation type="journal article" date="2017" name="Sci. Rep.">
        <title>Yeast surface display identifies a family of evasins from ticks with novel polyvalent CC chemokine-binding activities.</title>
        <authorList>
            <person name="Singh K."/>
            <person name="Davies G."/>
            <person name="Alenazi Y."/>
            <person name="Eaton J.R.O."/>
            <person name="Kawamura A."/>
            <person name="Bhattacharya S."/>
        </authorList>
    </citation>
    <scope>FUNCTION</scope>
</reference>
<accession>G3MIX6</accession>
<protein>
    <recommendedName>
        <fullName evidence="5">Evasin P1181</fullName>
    </recommendedName>
</protein>
<name>E1181_AMBMU</name>
<sequence length="115" mass="12951">MALNWSFRVIFVSAMWCALLKFATLEEREDDNDYGGGCPFVVLGNGTHAKPAGCSHLCNGAPETLDNIECYNVTEEVAKRMTPDIPYTCWLGWCSKGECKRDNRTEVCYRGSERE</sequence>
<feature type="signal peptide" evidence="2">
    <location>
        <begin position="1"/>
        <end position="25"/>
    </location>
</feature>
<feature type="chain" id="PRO_0000452175" description="Evasin P1181" evidence="2">
    <location>
        <begin position="26"/>
        <end position="115"/>
    </location>
</feature>
<feature type="glycosylation site" description="N-linked (GlcNAc...) asparagine" evidence="3">
    <location>
        <position position="45"/>
    </location>
</feature>
<feature type="glycosylation site" description="N-linked (GlcNAc...) asparagine" evidence="3">
    <location>
        <position position="72"/>
    </location>
</feature>
<feature type="glycosylation site" description="N-linked (GlcNAc...) asparagine" evidence="3">
    <location>
        <position position="103"/>
    </location>
</feature>
<feature type="disulfide bond" evidence="1">
    <location>
        <begin position="38"/>
        <end position="58"/>
    </location>
</feature>
<feature type="disulfide bond" evidence="1">
    <location>
        <begin position="54"/>
        <end position="94"/>
    </location>
</feature>
<feature type="disulfide bond" evidence="1">
    <location>
        <begin position="70"/>
        <end position="99"/>
    </location>
</feature>
<feature type="disulfide bond" evidence="1">
    <location>
        <begin position="89"/>
        <end position="108"/>
    </location>
</feature>
<proteinExistence type="inferred from homology"/>
<evidence type="ECO:0000250" key="1">
    <source>
        <dbReference type="UniProtKB" id="P0C8E7"/>
    </source>
</evidence>
<evidence type="ECO:0000255" key="2"/>
<evidence type="ECO:0000255" key="3">
    <source>
        <dbReference type="PROSITE-ProRule" id="PRU00498"/>
    </source>
</evidence>
<evidence type="ECO:0000269" key="4">
    <source>
    </source>
</evidence>
<evidence type="ECO:0000303" key="5">
    <source>
    </source>
</evidence>
<evidence type="ECO:0000305" key="6"/>
<evidence type="ECO:0000312" key="7">
    <source>
        <dbReference type="EMBL" id="AEO33444.1"/>
    </source>
</evidence>
<keyword id="KW-1015">Disulfide bond</keyword>
<keyword id="KW-0325">Glycoprotein</keyword>
<keyword id="KW-0964">Secreted</keyword>
<keyword id="KW-0732">Signal</keyword>
<organism evidence="7">
    <name type="scientific">Amblyomma maculatum</name>
    <name type="common">Gulf Coast tick</name>
    <dbReference type="NCBI Taxonomy" id="34609"/>
    <lineage>
        <taxon>Eukaryota</taxon>
        <taxon>Metazoa</taxon>
        <taxon>Ecdysozoa</taxon>
        <taxon>Arthropoda</taxon>
        <taxon>Chelicerata</taxon>
        <taxon>Arachnida</taxon>
        <taxon>Acari</taxon>
        <taxon>Parasitiformes</taxon>
        <taxon>Ixodida</taxon>
        <taxon>Ixodoidea</taxon>
        <taxon>Ixodidae</taxon>
        <taxon>Amblyomminae</taxon>
        <taxon>Amblyomma</taxon>
    </lineage>
</organism>